<accession>O42248</accession>
<gene>
    <name type="primary">gnb2l1</name>
    <name type="synonym">rack1</name>
</gene>
<proteinExistence type="evidence at protein level"/>
<name>GBLP_DANRE</name>
<organism>
    <name type="scientific">Danio rerio</name>
    <name type="common">Zebrafish</name>
    <name type="synonym">Brachydanio rerio</name>
    <dbReference type="NCBI Taxonomy" id="7955"/>
    <lineage>
        <taxon>Eukaryota</taxon>
        <taxon>Metazoa</taxon>
        <taxon>Chordata</taxon>
        <taxon>Craniata</taxon>
        <taxon>Vertebrata</taxon>
        <taxon>Euteleostomi</taxon>
        <taxon>Actinopterygii</taxon>
        <taxon>Neopterygii</taxon>
        <taxon>Teleostei</taxon>
        <taxon>Ostariophysi</taxon>
        <taxon>Cypriniformes</taxon>
        <taxon>Danionidae</taxon>
        <taxon>Danioninae</taxon>
        <taxon>Danio</taxon>
    </lineage>
</organism>
<feature type="chain" id="PRO_0000127736" description="Small ribosomal subunit protein RACK1">
    <location>
        <begin position="1"/>
        <end position="317"/>
    </location>
</feature>
<feature type="repeat" description="WD 1">
    <location>
        <begin position="13"/>
        <end position="44"/>
    </location>
</feature>
<feature type="repeat" description="WD 2">
    <location>
        <begin position="61"/>
        <end position="91"/>
    </location>
</feature>
<feature type="repeat" description="WD 3">
    <location>
        <begin position="103"/>
        <end position="133"/>
    </location>
</feature>
<feature type="repeat" description="WD 4">
    <location>
        <begin position="146"/>
        <end position="178"/>
    </location>
</feature>
<feature type="repeat" description="WD 5">
    <location>
        <begin position="190"/>
        <end position="220"/>
    </location>
</feature>
<feature type="repeat" description="WD 6">
    <location>
        <begin position="231"/>
        <end position="260"/>
    </location>
</feature>
<feature type="repeat" description="WD 7">
    <location>
        <begin position="281"/>
        <end position="311"/>
    </location>
</feature>
<evidence type="ECO:0000250" key="1"/>
<evidence type="ECO:0000269" key="2">
    <source>
    </source>
</evidence>
<evidence type="ECO:0000305" key="3"/>
<keyword id="KW-0002">3D-structure</keyword>
<keyword id="KW-0963">Cytoplasm</keyword>
<keyword id="KW-1185">Reference proteome</keyword>
<keyword id="KW-0677">Repeat</keyword>
<keyword id="KW-0687">Ribonucleoprotein</keyword>
<keyword id="KW-0689">Ribosomal protein</keyword>
<keyword id="KW-0853">WD repeat</keyword>
<reference key="1">
    <citation type="journal article" date="1999" name="Mar. Biotechnol.">
        <title>Isolation of complementary DNAs coding for a receptor for activated C kinase (RACK) from zebrafish (Danio rerio) and Tilapia (Oreochromis niloticus): constitutive developmental and tissue expression.</title>
        <authorList>
            <person name="Hamilton L.C."/>
            <person name="Wright J.M."/>
        </authorList>
    </citation>
    <scope>NUCLEOTIDE SEQUENCE [MRNA]</scope>
</reference>
<reference key="2">
    <citation type="journal article" date="2004" name="Proc. Natl. Acad. Sci. U.S.A.">
        <title>Hematopoietic gene expression profile in zebrafish kidney marrow.</title>
        <authorList>
            <person name="Song H.-D."/>
            <person name="Sun X.-J."/>
            <person name="Deng M."/>
            <person name="Zhang G.-W."/>
            <person name="Zhou Y."/>
            <person name="Wu X.-Y."/>
            <person name="Sheng Y."/>
            <person name="Chen Y."/>
            <person name="Ruan Z."/>
            <person name="Jiang C.-L."/>
            <person name="Fan H.-Y."/>
            <person name="Zon L.I."/>
            <person name="Kanki J.P."/>
            <person name="Liu T.X."/>
            <person name="Look A.T."/>
            <person name="Chen Z."/>
        </authorList>
    </citation>
    <scope>NUCLEOTIDE SEQUENCE [LARGE SCALE MRNA]</scope>
    <source>
        <tissue>Kidney marrow</tissue>
    </source>
</reference>
<reference key="3">
    <citation type="submission" date="2003-03" db="EMBL/GenBank/DDBJ databases">
        <authorList>
            <consortium name="NIH - Zebrafish Gene Collection (ZGC) project"/>
        </authorList>
    </citation>
    <scope>NUCLEOTIDE SEQUENCE [LARGE SCALE MRNA]</scope>
</reference>
<reference key="4">
    <citation type="journal article" date="2011" name="Proc. Natl. Acad. Sci. U.S.A.">
        <title>Rack1 is required for Vangl2 membrane localization and planar cell polarity signaling while attenuating canonical Wnt activity.</title>
        <authorList>
            <person name="Li S."/>
            <person name="Esterberg R."/>
            <person name="Lachance V."/>
            <person name="Ren D."/>
            <person name="Radde-Gallwitz K."/>
            <person name="Chi F."/>
            <person name="Parent J.L."/>
            <person name="Fritz A."/>
            <person name="Chen P."/>
        </authorList>
    </citation>
    <scope>FUNCTION</scope>
    <scope>SUBCELLULAR LOCATION</scope>
</reference>
<dbReference type="EMBL" id="AF025330">
    <property type="protein sequence ID" value="AAB81617.1"/>
    <property type="molecule type" value="mRNA"/>
</dbReference>
<dbReference type="EMBL" id="AY423038">
    <property type="protein sequence ID" value="AAQ98014.1"/>
    <property type="molecule type" value="mRNA"/>
</dbReference>
<dbReference type="EMBL" id="BC049459">
    <property type="protein sequence ID" value="AAH49459.1"/>
    <property type="molecule type" value="mRNA"/>
</dbReference>
<dbReference type="RefSeq" id="NP_571519.1">
    <property type="nucleotide sequence ID" value="NM_131444.1"/>
</dbReference>
<dbReference type="PDB" id="7OYA">
    <property type="method" value="EM"/>
    <property type="resolution" value="3.20 A"/>
    <property type="chains" value="g2=1-317"/>
</dbReference>
<dbReference type="PDB" id="7OYB">
    <property type="method" value="EM"/>
    <property type="resolution" value="2.40 A"/>
    <property type="chains" value="g2=1-317"/>
</dbReference>
<dbReference type="PDBsum" id="7OYA"/>
<dbReference type="PDBsum" id="7OYB"/>
<dbReference type="EMDB" id="EMD-13111"/>
<dbReference type="EMDB" id="EMD-13112"/>
<dbReference type="SMR" id="O42248"/>
<dbReference type="FunCoup" id="O42248">
    <property type="interactions" value="2632"/>
</dbReference>
<dbReference type="STRING" id="7955.ENSDARP00000061000"/>
<dbReference type="PaxDb" id="7955-ENSDARP00000061000"/>
<dbReference type="Ensembl" id="ENSDART00000061001">
    <property type="protein sequence ID" value="ENSDARP00000061000"/>
    <property type="gene ID" value="ENSDARG00000041619"/>
</dbReference>
<dbReference type="GeneID" id="30722"/>
<dbReference type="KEGG" id="dre:30722"/>
<dbReference type="AGR" id="ZFIN:ZDB-GENE-990415-89"/>
<dbReference type="CTD" id="10399"/>
<dbReference type="ZFIN" id="ZDB-GENE-990415-89">
    <property type="gene designation" value="rack1"/>
</dbReference>
<dbReference type="eggNOG" id="KOG0279">
    <property type="taxonomic scope" value="Eukaryota"/>
</dbReference>
<dbReference type="HOGENOM" id="CLU_000288_57_7_1"/>
<dbReference type="InParanoid" id="O42248"/>
<dbReference type="OMA" id="NCKLKIN"/>
<dbReference type="OrthoDB" id="7875889at2759"/>
<dbReference type="PhylomeDB" id="O42248"/>
<dbReference type="TreeFam" id="TF300600"/>
<dbReference type="Reactome" id="R-DRE-5626978">
    <property type="pathway name" value="TNFR1-mediated ceramide production"/>
</dbReference>
<dbReference type="PRO" id="PR:O42248"/>
<dbReference type="Proteomes" id="UP000000437">
    <property type="component" value="Chromosome 14"/>
</dbReference>
<dbReference type="Bgee" id="ENSDARG00000041619">
    <property type="expression patterns" value="Expressed in presomitic mesoderm and 26 other cell types or tissues"/>
</dbReference>
<dbReference type="ExpressionAtlas" id="O42248">
    <property type="expression patterns" value="baseline"/>
</dbReference>
<dbReference type="GO" id="GO:0005737">
    <property type="term" value="C:cytoplasm"/>
    <property type="evidence" value="ECO:0000314"/>
    <property type="project" value="ZFIN"/>
</dbReference>
<dbReference type="GO" id="GO:0005829">
    <property type="term" value="C:cytosol"/>
    <property type="evidence" value="ECO:0000318"/>
    <property type="project" value="GO_Central"/>
</dbReference>
<dbReference type="GO" id="GO:0005634">
    <property type="term" value="C:nucleus"/>
    <property type="evidence" value="ECO:0000318"/>
    <property type="project" value="GO_Central"/>
</dbReference>
<dbReference type="GO" id="GO:1990904">
    <property type="term" value="C:ribonucleoprotein complex"/>
    <property type="evidence" value="ECO:0007669"/>
    <property type="project" value="UniProtKB-KW"/>
</dbReference>
<dbReference type="GO" id="GO:0005840">
    <property type="term" value="C:ribosome"/>
    <property type="evidence" value="ECO:0007669"/>
    <property type="project" value="UniProtKB-KW"/>
</dbReference>
<dbReference type="GO" id="GO:0005080">
    <property type="term" value="F:protein kinase C binding"/>
    <property type="evidence" value="ECO:0000318"/>
    <property type="project" value="GO_Central"/>
</dbReference>
<dbReference type="GO" id="GO:0043022">
    <property type="term" value="F:ribosome binding"/>
    <property type="evidence" value="ECO:0000318"/>
    <property type="project" value="GO_Central"/>
</dbReference>
<dbReference type="GO" id="GO:0045182">
    <property type="term" value="F:translation regulator activity"/>
    <property type="evidence" value="ECO:0007669"/>
    <property type="project" value="InterPro"/>
</dbReference>
<dbReference type="GO" id="GO:0001525">
    <property type="term" value="P:angiogenesis"/>
    <property type="evidence" value="ECO:0000315"/>
    <property type="project" value="ZFIN"/>
</dbReference>
<dbReference type="GO" id="GO:0060027">
    <property type="term" value="P:convergent extension involved in gastrulation"/>
    <property type="evidence" value="ECO:0000315"/>
    <property type="project" value="ZFIN"/>
</dbReference>
<dbReference type="GO" id="GO:2001125">
    <property type="term" value="P:negative regulation of translational frameshifting"/>
    <property type="evidence" value="ECO:0000318"/>
    <property type="project" value="GO_Central"/>
</dbReference>
<dbReference type="GO" id="GO:0030178">
    <property type="term" value="P:negative regulation of Wnt signaling pathway"/>
    <property type="evidence" value="ECO:0000315"/>
    <property type="project" value="UniProtKB"/>
</dbReference>
<dbReference type="GO" id="GO:2000543">
    <property type="term" value="P:positive regulation of gastrulation"/>
    <property type="evidence" value="ECO:0000315"/>
    <property type="project" value="UniProtKB"/>
</dbReference>
<dbReference type="GO" id="GO:0051302">
    <property type="term" value="P:regulation of cell division"/>
    <property type="evidence" value="ECO:0000315"/>
    <property type="project" value="UniProtKB"/>
</dbReference>
<dbReference type="GO" id="GO:2000114">
    <property type="term" value="P:regulation of establishment of cell polarity"/>
    <property type="evidence" value="ECO:0000315"/>
    <property type="project" value="UniProtKB"/>
</dbReference>
<dbReference type="GO" id="GO:0032880">
    <property type="term" value="P:regulation of protein localization"/>
    <property type="evidence" value="ECO:0000315"/>
    <property type="project" value="UniProtKB"/>
</dbReference>
<dbReference type="GO" id="GO:0072344">
    <property type="term" value="P:rescue of stalled ribosome"/>
    <property type="evidence" value="ECO:0000318"/>
    <property type="project" value="GO_Central"/>
</dbReference>
<dbReference type="CDD" id="cd00200">
    <property type="entry name" value="WD40"/>
    <property type="match status" value="1"/>
</dbReference>
<dbReference type="FunFam" id="2.130.10.10:FF:001252">
    <property type="entry name" value="Receptor of activated protein C kinase 1"/>
    <property type="match status" value="1"/>
</dbReference>
<dbReference type="Gene3D" id="2.130.10.10">
    <property type="entry name" value="YVTN repeat-like/Quinoprotein amine dehydrogenase"/>
    <property type="match status" value="1"/>
</dbReference>
<dbReference type="InterPro" id="IPR020472">
    <property type="entry name" value="G-protein_beta_WD-40_rep"/>
</dbReference>
<dbReference type="InterPro" id="IPR045223">
    <property type="entry name" value="RACK1-like"/>
</dbReference>
<dbReference type="InterPro" id="IPR015943">
    <property type="entry name" value="WD40/YVTN_repeat-like_dom_sf"/>
</dbReference>
<dbReference type="InterPro" id="IPR019775">
    <property type="entry name" value="WD40_repeat_CS"/>
</dbReference>
<dbReference type="InterPro" id="IPR036322">
    <property type="entry name" value="WD40_repeat_dom_sf"/>
</dbReference>
<dbReference type="InterPro" id="IPR001680">
    <property type="entry name" value="WD40_rpt"/>
</dbReference>
<dbReference type="PANTHER" id="PTHR19868">
    <property type="entry name" value="RECEPTOR FOR ACTIVATED PROTEIN KINASE C RACK1"/>
    <property type="match status" value="1"/>
</dbReference>
<dbReference type="Pfam" id="PF00400">
    <property type="entry name" value="WD40"/>
    <property type="match status" value="7"/>
</dbReference>
<dbReference type="PRINTS" id="PR00320">
    <property type="entry name" value="GPROTEINBRPT"/>
</dbReference>
<dbReference type="SMART" id="SM00320">
    <property type="entry name" value="WD40"/>
    <property type="match status" value="7"/>
</dbReference>
<dbReference type="SUPFAM" id="SSF50978">
    <property type="entry name" value="WD40 repeat-like"/>
    <property type="match status" value="1"/>
</dbReference>
<dbReference type="PROSITE" id="PS00678">
    <property type="entry name" value="WD_REPEATS_1"/>
    <property type="match status" value="4"/>
</dbReference>
<dbReference type="PROSITE" id="PS50082">
    <property type="entry name" value="WD_REPEATS_2"/>
    <property type="match status" value="6"/>
</dbReference>
<dbReference type="PROSITE" id="PS50294">
    <property type="entry name" value="WD_REPEATS_REGION"/>
    <property type="match status" value="1"/>
</dbReference>
<comment type="function">
    <text evidence="1 2">Involved in the recruitment, assembly and/or regulation of a variety of signaling molecules. Interacts with a wide variety of proteins and plays a role in many cellular processes (By similarity). Required for VANGL2 membrane localization, inhibits Wnt signaling and regulates cellular polarization and oriented cell division during gastrulation.</text>
</comment>
<comment type="subcellular location">
    <subcellularLocation>
        <location evidence="2">Cytoplasm</location>
    </subcellularLocation>
</comment>
<comment type="similarity">
    <text evidence="3">Belongs to the WD repeat G protein beta family. Ribosomal protein RACK1 subfamily.</text>
</comment>
<sequence length="317" mass="35123">MTEQMTVRGTLKGHSGWVTQIATTPQFPDMILSASRDKTIIMWKLTRDETNYGIPQRALRGHSHFVSDVVISSDGQFALSGSWDGTLRLWDLTTGTTTRRFVGHTKDVLSVAFSADNRQIVSGSRDKTIKLWNTLGVCKYTIQDDSHTEWVSCVRFSPNSSNPIIVSCGWDKMVKVWNLANCKLKTNHIGHTGYLNTVTVSPDGSLCASGGKDGQAMLWDLNEGKHLYTLDGGDTINALCFSPNRYWLCAATGPSIKIWDLEGKIIVDELRQDIITTNSKAEPPQCTSLAWSADGQTLFAGYTDNLIRVWQVTIGTR</sequence>
<protein>
    <recommendedName>
        <fullName evidence="3">Small ribosomal subunit protein RACK1</fullName>
    </recommendedName>
    <alternativeName>
        <fullName>Guanine nucleotide-binding protein subunit beta-2-like 1</fullName>
    </alternativeName>
    <alternativeName>
        <fullName>Receptor of activated protein kinase C</fullName>
        <shortName>RACK</shortName>
    </alternativeName>
</protein>